<feature type="chain" id="PRO_1000057426" description="4-diphosphocytidyl-2-C-methyl-D-erythritol kinase">
    <location>
        <begin position="1"/>
        <end position="299"/>
    </location>
</feature>
<feature type="active site" evidence="1">
    <location>
        <position position="20"/>
    </location>
</feature>
<feature type="active site" evidence="1">
    <location>
        <position position="148"/>
    </location>
</feature>
<feature type="binding site" evidence="1">
    <location>
        <begin position="106"/>
        <end position="116"/>
    </location>
    <ligand>
        <name>ATP</name>
        <dbReference type="ChEBI" id="CHEBI:30616"/>
    </ligand>
</feature>
<keyword id="KW-0067">ATP-binding</keyword>
<keyword id="KW-0414">Isoprene biosynthesis</keyword>
<keyword id="KW-0418">Kinase</keyword>
<keyword id="KW-0547">Nucleotide-binding</keyword>
<keyword id="KW-0808">Transferase</keyword>
<comment type="function">
    <text evidence="1">Catalyzes the phosphorylation of the position 2 hydroxy group of 4-diphosphocytidyl-2C-methyl-D-erythritol.</text>
</comment>
<comment type="catalytic activity">
    <reaction evidence="1">
        <text>4-CDP-2-C-methyl-D-erythritol + ATP = 4-CDP-2-C-methyl-D-erythritol 2-phosphate + ADP + H(+)</text>
        <dbReference type="Rhea" id="RHEA:18437"/>
        <dbReference type="ChEBI" id="CHEBI:15378"/>
        <dbReference type="ChEBI" id="CHEBI:30616"/>
        <dbReference type="ChEBI" id="CHEBI:57823"/>
        <dbReference type="ChEBI" id="CHEBI:57919"/>
        <dbReference type="ChEBI" id="CHEBI:456216"/>
        <dbReference type="EC" id="2.7.1.148"/>
    </reaction>
</comment>
<comment type="pathway">
    <text evidence="1">Isoprenoid biosynthesis; isopentenyl diphosphate biosynthesis via DXP pathway; isopentenyl diphosphate from 1-deoxy-D-xylulose 5-phosphate: step 3/6.</text>
</comment>
<comment type="subunit">
    <text evidence="1">Homodimer.</text>
</comment>
<comment type="similarity">
    <text evidence="1">Belongs to the GHMP kinase family. IspE subfamily.</text>
</comment>
<organism>
    <name type="scientific">Yersinia pseudotuberculosis serotype O:1b (strain IP 31758)</name>
    <dbReference type="NCBI Taxonomy" id="349747"/>
    <lineage>
        <taxon>Bacteria</taxon>
        <taxon>Pseudomonadati</taxon>
        <taxon>Pseudomonadota</taxon>
        <taxon>Gammaproteobacteria</taxon>
        <taxon>Enterobacterales</taxon>
        <taxon>Yersiniaceae</taxon>
        <taxon>Yersinia</taxon>
    </lineage>
</organism>
<dbReference type="EC" id="2.7.1.148" evidence="1"/>
<dbReference type="EMBL" id="CP000720">
    <property type="protein sequence ID" value="ABS46986.1"/>
    <property type="molecule type" value="Genomic_DNA"/>
</dbReference>
<dbReference type="RefSeq" id="WP_002211239.1">
    <property type="nucleotide sequence ID" value="NC_009708.1"/>
</dbReference>
<dbReference type="SMR" id="A7FIG4"/>
<dbReference type="GeneID" id="57976647"/>
<dbReference type="KEGG" id="ypi:YpsIP31758_2069"/>
<dbReference type="HOGENOM" id="CLU_053057_3_0_6"/>
<dbReference type="UniPathway" id="UPA00056">
    <property type="reaction ID" value="UER00094"/>
</dbReference>
<dbReference type="Proteomes" id="UP000002412">
    <property type="component" value="Chromosome"/>
</dbReference>
<dbReference type="GO" id="GO:0050515">
    <property type="term" value="F:4-(cytidine 5'-diphospho)-2-C-methyl-D-erythritol kinase activity"/>
    <property type="evidence" value="ECO:0007669"/>
    <property type="project" value="UniProtKB-UniRule"/>
</dbReference>
<dbReference type="GO" id="GO:0005524">
    <property type="term" value="F:ATP binding"/>
    <property type="evidence" value="ECO:0007669"/>
    <property type="project" value="UniProtKB-UniRule"/>
</dbReference>
<dbReference type="GO" id="GO:0019288">
    <property type="term" value="P:isopentenyl diphosphate biosynthetic process, methylerythritol 4-phosphate pathway"/>
    <property type="evidence" value="ECO:0007669"/>
    <property type="project" value="UniProtKB-UniRule"/>
</dbReference>
<dbReference type="GO" id="GO:0016114">
    <property type="term" value="P:terpenoid biosynthetic process"/>
    <property type="evidence" value="ECO:0007669"/>
    <property type="project" value="InterPro"/>
</dbReference>
<dbReference type="FunFam" id="3.30.230.10:FF:000022">
    <property type="entry name" value="4-diphosphocytidyl-2-C-methyl-D-erythritol kinase"/>
    <property type="match status" value="1"/>
</dbReference>
<dbReference type="FunFam" id="3.30.70.890:FF:000004">
    <property type="entry name" value="4-diphosphocytidyl-2-C-methyl-D-erythritol kinase"/>
    <property type="match status" value="1"/>
</dbReference>
<dbReference type="Gene3D" id="3.30.230.10">
    <property type="match status" value="1"/>
</dbReference>
<dbReference type="Gene3D" id="3.30.70.890">
    <property type="entry name" value="GHMP kinase, C-terminal domain"/>
    <property type="match status" value="1"/>
</dbReference>
<dbReference type="HAMAP" id="MF_00061">
    <property type="entry name" value="IspE"/>
    <property type="match status" value="1"/>
</dbReference>
<dbReference type="InterPro" id="IPR013750">
    <property type="entry name" value="GHMP_kinase_C_dom"/>
</dbReference>
<dbReference type="InterPro" id="IPR036554">
    <property type="entry name" value="GHMP_kinase_C_sf"/>
</dbReference>
<dbReference type="InterPro" id="IPR006204">
    <property type="entry name" value="GHMP_kinase_N_dom"/>
</dbReference>
<dbReference type="InterPro" id="IPR004424">
    <property type="entry name" value="IspE"/>
</dbReference>
<dbReference type="InterPro" id="IPR020568">
    <property type="entry name" value="Ribosomal_Su5_D2-typ_SF"/>
</dbReference>
<dbReference type="InterPro" id="IPR014721">
    <property type="entry name" value="Ribsml_uS5_D2-typ_fold_subgr"/>
</dbReference>
<dbReference type="NCBIfam" id="TIGR00154">
    <property type="entry name" value="ispE"/>
    <property type="match status" value="1"/>
</dbReference>
<dbReference type="PANTHER" id="PTHR43527">
    <property type="entry name" value="4-DIPHOSPHOCYTIDYL-2-C-METHYL-D-ERYTHRITOL KINASE, CHLOROPLASTIC"/>
    <property type="match status" value="1"/>
</dbReference>
<dbReference type="PANTHER" id="PTHR43527:SF2">
    <property type="entry name" value="4-DIPHOSPHOCYTIDYL-2-C-METHYL-D-ERYTHRITOL KINASE, CHLOROPLASTIC"/>
    <property type="match status" value="1"/>
</dbReference>
<dbReference type="Pfam" id="PF08544">
    <property type="entry name" value="GHMP_kinases_C"/>
    <property type="match status" value="1"/>
</dbReference>
<dbReference type="Pfam" id="PF00288">
    <property type="entry name" value="GHMP_kinases_N"/>
    <property type="match status" value="1"/>
</dbReference>
<dbReference type="PIRSF" id="PIRSF010376">
    <property type="entry name" value="IspE"/>
    <property type="match status" value="1"/>
</dbReference>
<dbReference type="SUPFAM" id="SSF55060">
    <property type="entry name" value="GHMP Kinase, C-terminal domain"/>
    <property type="match status" value="1"/>
</dbReference>
<dbReference type="SUPFAM" id="SSF54211">
    <property type="entry name" value="Ribosomal protein S5 domain 2-like"/>
    <property type="match status" value="1"/>
</dbReference>
<accession>A7FIG4</accession>
<gene>
    <name evidence="1" type="primary">ispE</name>
    <name type="ordered locus">YpsIP31758_2069</name>
</gene>
<name>ISPE_YERP3</name>
<reference key="1">
    <citation type="journal article" date="2007" name="PLoS Genet.">
        <title>The complete genome sequence of Yersinia pseudotuberculosis IP31758, the causative agent of Far East scarlet-like fever.</title>
        <authorList>
            <person name="Eppinger M."/>
            <person name="Rosovitz M.J."/>
            <person name="Fricke W.F."/>
            <person name="Rasko D.A."/>
            <person name="Kokorina G."/>
            <person name="Fayolle C."/>
            <person name="Lindler L.E."/>
            <person name="Carniel E."/>
            <person name="Ravel J."/>
        </authorList>
    </citation>
    <scope>NUCLEOTIDE SEQUENCE [LARGE SCALE GENOMIC DNA]</scope>
    <source>
        <strain>IP 31758</strain>
    </source>
</reference>
<proteinExistence type="inferred from homology"/>
<sequence length="299" mass="32675">MTTANQPICPSPAKWPSPAKLNLFLYITGQRADGYHQLQTLFQFLDYGDQLTIEPRDDNQIRLLTPIAGVENEQNLIVRAAKMLQKHPGNTPVPRGADISIDKCLPMGGGLGGGSSNAATVLVALNLLWQCGLTDEQLADLGLTLGADVPVFVRGHAAFAEGIGEKLQPAEPVEKWYLVIHPGVNIPTPIIFSDPELKRNTPIRPLAALLSTPYANDCEPIARKRFREVEQALSWLLEYAPSRLTGTGACVFAEFDTESSARQVLSIAPEWLHGFVARGVNVSPLHRVRSGKIESSERR</sequence>
<evidence type="ECO:0000255" key="1">
    <source>
        <dbReference type="HAMAP-Rule" id="MF_00061"/>
    </source>
</evidence>
<protein>
    <recommendedName>
        <fullName evidence="1">4-diphosphocytidyl-2-C-methyl-D-erythritol kinase</fullName>
        <shortName evidence="1">CMK</shortName>
        <ecNumber evidence="1">2.7.1.148</ecNumber>
    </recommendedName>
    <alternativeName>
        <fullName evidence="1">4-(cytidine-5'-diphospho)-2-C-methyl-D-erythritol kinase</fullName>
    </alternativeName>
</protein>